<feature type="chain" id="PRO_0000403600" description="Flap endonuclease 1">
    <location>
        <begin position="1"/>
        <end position="377"/>
    </location>
</feature>
<feature type="region of interest" description="N-domain">
    <location>
        <begin position="1"/>
        <end position="105"/>
    </location>
</feature>
<feature type="region of interest" description="Disordered" evidence="2">
    <location>
        <begin position="96"/>
        <end position="115"/>
    </location>
</feature>
<feature type="region of interest" description="I-domain">
    <location>
        <begin position="123"/>
        <end position="254"/>
    </location>
</feature>
<feature type="region of interest" description="Interaction with PCNA" evidence="1">
    <location>
        <begin position="337"/>
        <end position="345"/>
    </location>
</feature>
<feature type="region of interest" description="Disordered" evidence="2">
    <location>
        <begin position="350"/>
        <end position="377"/>
    </location>
</feature>
<feature type="compositionally biased region" description="Basic residues" evidence="2">
    <location>
        <begin position="360"/>
        <end position="377"/>
    </location>
</feature>
<feature type="binding site" evidence="1">
    <location>
        <position position="34"/>
    </location>
    <ligand>
        <name>Mg(2+)</name>
        <dbReference type="ChEBI" id="CHEBI:18420"/>
        <label>1</label>
    </ligand>
</feature>
<feature type="binding site" evidence="1">
    <location>
        <position position="47"/>
    </location>
    <ligand>
        <name>DNA</name>
        <dbReference type="ChEBI" id="CHEBI:16991"/>
    </ligand>
</feature>
<feature type="binding site" evidence="1">
    <location>
        <position position="71"/>
    </location>
    <ligand>
        <name>DNA</name>
        <dbReference type="ChEBI" id="CHEBI:16991"/>
    </ligand>
</feature>
<feature type="binding site" evidence="1">
    <location>
        <position position="87"/>
    </location>
    <ligand>
        <name>Mg(2+)</name>
        <dbReference type="ChEBI" id="CHEBI:18420"/>
        <label>1</label>
    </ligand>
</feature>
<feature type="binding site" evidence="1">
    <location>
        <position position="159"/>
    </location>
    <ligand>
        <name>DNA</name>
        <dbReference type="ChEBI" id="CHEBI:16991"/>
    </ligand>
</feature>
<feature type="binding site" evidence="1">
    <location>
        <position position="159"/>
    </location>
    <ligand>
        <name>Mg(2+)</name>
        <dbReference type="ChEBI" id="CHEBI:18420"/>
        <label>1</label>
    </ligand>
</feature>
<feature type="binding site" evidence="1">
    <location>
        <position position="161"/>
    </location>
    <ligand>
        <name>Mg(2+)</name>
        <dbReference type="ChEBI" id="CHEBI:18420"/>
        <label>1</label>
    </ligand>
</feature>
<feature type="binding site" evidence="1">
    <location>
        <position position="180"/>
    </location>
    <ligand>
        <name>Mg(2+)</name>
        <dbReference type="ChEBI" id="CHEBI:18420"/>
        <label>2</label>
    </ligand>
</feature>
<feature type="binding site" evidence="1">
    <location>
        <position position="182"/>
    </location>
    <ligand>
        <name>Mg(2+)</name>
        <dbReference type="ChEBI" id="CHEBI:18420"/>
        <label>2</label>
    </ligand>
</feature>
<feature type="binding site" evidence="1">
    <location>
        <position position="232"/>
    </location>
    <ligand>
        <name>DNA</name>
        <dbReference type="ChEBI" id="CHEBI:16991"/>
    </ligand>
</feature>
<feature type="binding site" evidence="1">
    <location>
        <position position="234"/>
    </location>
    <ligand>
        <name>DNA</name>
        <dbReference type="ChEBI" id="CHEBI:16991"/>
    </ligand>
</feature>
<feature type="binding site" evidence="1">
    <location>
        <position position="234"/>
    </location>
    <ligand>
        <name>Mg(2+)</name>
        <dbReference type="ChEBI" id="CHEBI:18420"/>
        <label>2</label>
    </ligand>
</feature>
<name>FEN1_SCHJY</name>
<proteinExistence type="inferred from homology"/>
<keyword id="KW-0227">DNA damage</keyword>
<keyword id="KW-0234">DNA repair</keyword>
<keyword id="KW-0235">DNA replication</keyword>
<keyword id="KW-0255">Endonuclease</keyword>
<keyword id="KW-0269">Exonuclease</keyword>
<keyword id="KW-0378">Hydrolase</keyword>
<keyword id="KW-0460">Magnesium</keyword>
<keyword id="KW-0479">Metal-binding</keyword>
<keyword id="KW-0496">Mitochondrion</keyword>
<keyword id="KW-0540">Nuclease</keyword>
<keyword id="KW-0539">Nucleus</keyword>
<keyword id="KW-0597">Phosphoprotein</keyword>
<keyword id="KW-1185">Reference proteome</keyword>
<sequence>MGIKGLSQVIADNCPSAVRHNDIKNYFGRKVAIDASMSLYQFLIQVRGQDGQQLMNDQGETTSHLMGMFYRTLRMVDNGLKPCYVFDGKPPTLKSGELAKRASRQQKAREEREEAKEVGTAEMVDKFAKRTVRVTRQHNDEAKKLLELMGIPYVNAPCEAEAQCAALARAGKVYAAASEDMDTMCFQAPILLRHLTFSEQRKEPISEYSFEKTIEGLNFTIEQFVDLCILLGCDYCDPIRGVGPARAVELIRQHGNLDNFVKDADKKKFPIPEDWPYQDARRLFLEAEVQEAKDIELKWRAPDEQGIIKFLVEEKGFNEDRVRVGINRLVKASKTIPQGRLDSFFKVLPSTKKEKEKPKAAAKRKRDTKSSAPKKKR</sequence>
<comment type="function">
    <text evidence="1">Structure-specific nuclease with 5'-flap endonuclease and 5'-3' exonuclease activities involved in DNA replication and repair. During DNA replication, cleaves the 5'-overhanging flap structure that is generated by displacement synthesis when DNA polymerase encounters the 5'-end of a downstream Okazaki fragment. It enters the flap from the 5'-end and then tracks to cleave the flap base, leaving a nick for ligation. Also involved in the long patch base excision repair (LP-BER) pathway, by cleaving within the apurinic/apyrimidinic (AP) site-terminated flap. Acts as a genome stabilization factor that prevents flaps from equilibrating into structures that lead to duplications and deletions. Also possesses 5'-3' exonuclease activity on nicked or gapped double-stranded DNA, and exhibits RNase H activity. Also involved in replication and repair of rDNA and in repairing mitochondrial DNA.</text>
</comment>
<comment type="cofactor">
    <cofactor evidence="1">
        <name>Mg(2+)</name>
        <dbReference type="ChEBI" id="CHEBI:18420"/>
    </cofactor>
    <text evidence="1">Binds 2 magnesium ions per subunit. They probably participate in the reaction catalyzed by the enzyme. May bind an additional third magnesium ion after substrate binding.</text>
</comment>
<comment type="subunit">
    <text evidence="1">Interacts with PCNA. Three molecules of rad2 bind to one PCNA trimer with each molecule binding to one PCNA monomer. PCNA stimulates the nuclease activity without altering cleavage specificity.</text>
</comment>
<comment type="subcellular location">
    <subcellularLocation>
        <location evidence="1">Nucleus</location>
        <location evidence="1">Nucleolus</location>
    </subcellularLocation>
    <subcellularLocation>
        <location evidence="1">Nucleus</location>
        <location evidence="1">Nucleoplasm</location>
    </subcellularLocation>
    <subcellularLocation>
        <location evidence="1">Mitochondrion</location>
    </subcellularLocation>
    <text evidence="1">Resides mostly in the nucleoli and relocalizes to the nucleoplasm upon DNA damage.</text>
</comment>
<comment type="PTM">
    <text evidence="1">Phosphorylated. Phosphorylation upon DNA damage induces relocalization to the nuclear plasma.</text>
</comment>
<comment type="similarity">
    <text evidence="1">Belongs to the XPG/RAD2 endonuclease family. FEN1 subfamily.</text>
</comment>
<dbReference type="EC" id="3.1.-.-" evidence="1"/>
<dbReference type="EMBL" id="KE651168">
    <property type="protein sequence ID" value="EEB06605.1"/>
    <property type="molecule type" value="Genomic_DNA"/>
</dbReference>
<dbReference type="RefSeq" id="XP_002172898.1">
    <property type="nucleotide sequence ID" value="XM_002172862.2"/>
</dbReference>
<dbReference type="SMR" id="B6JYI7"/>
<dbReference type="STRING" id="402676.B6JYI7"/>
<dbReference type="EnsemblFungi" id="EEB06605">
    <property type="protein sequence ID" value="EEB06605"/>
    <property type="gene ID" value="SJAG_01648"/>
</dbReference>
<dbReference type="GeneID" id="7052338"/>
<dbReference type="JaponicusDB" id="SJAG_01648">
    <property type="gene designation" value="rad2"/>
</dbReference>
<dbReference type="VEuPathDB" id="FungiDB:SJAG_01648"/>
<dbReference type="eggNOG" id="KOG2519">
    <property type="taxonomic scope" value="Eukaryota"/>
</dbReference>
<dbReference type="HOGENOM" id="CLU_032444_1_1_1"/>
<dbReference type="OMA" id="MGIPWVQ"/>
<dbReference type="OrthoDB" id="1937206at2759"/>
<dbReference type="Proteomes" id="UP000001744">
    <property type="component" value="Unassembled WGS sequence"/>
</dbReference>
<dbReference type="GO" id="GO:0005737">
    <property type="term" value="C:cytoplasm"/>
    <property type="evidence" value="ECO:0000318"/>
    <property type="project" value="GO_Central"/>
</dbReference>
<dbReference type="GO" id="GO:0005739">
    <property type="term" value="C:mitochondrion"/>
    <property type="evidence" value="ECO:0007669"/>
    <property type="project" value="UniProtKB-SubCell"/>
</dbReference>
<dbReference type="GO" id="GO:0005730">
    <property type="term" value="C:nucleolus"/>
    <property type="evidence" value="ECO:0007669"/>
    <property type="project" value="UniProtKB-SubCell"/>
</dbReference>
<dbReference type="GO" id="GO:0005654">
    <property type="term" value="C:nucleoplasm"/>
    <property type="evidence" value="ECO:0007669"/>
    <property type="project" value="UniProtKB-SubCell"/>
</dbReference>
<dbReference type="GO" id="GO:0005634">
    <property type="term" value="C:nucleus"/>
    <property type="evidence" value="ECO:0000318"/>
    <property type="project" value="GO_Central"/>
</dbReference>
<dbReference type="GO" id="GO:0035861">
    <property type="term" value="C:site of double-strand break"/>
    <property type="evidence" value="ECO:0007669"/>
    <property type="project" value="EnsemblFungi"/>
</dbReference>
<dbReference type="GO" id="GO:0008409">
    <property type="term" value="F:5'-3' exonuclease activity"/>
    <property type="evidence" value="ECO:0000318"/>
    <property type="project" value="GO_Central"/>
</dbReference>
<dbReference type="GO" id="GO:0017108">
    <property type="term" value="F:5'-flap endonuclease activity"/>
    <property type="evidence" value="ECO:0000318"/>
    <property type="project" value="GO_Central"/>
</dbReference>
<dbReference type="GO" id="GO:0003677">
    <property type="term" value="F:DNA binding"/>
    <property type="evidence" value="ECO:0007669"/>
    <property type="project" value="UniProtKB-UniRule"/>
</dbReference>
<dbReference type="GO" id="GO:0051908">
    <property type="term" value="F:double-stranded DNA 5'-3' DNA exonuclease activity"/>
    <property type="evidence" value="ECO:0007669"/>
    <property type="project" value="EnsemblFungi"/>
</dbReference>
<dbReference type="GO" id="GO:0000287">
    <property type="term" value="F:magnesium ion binding"/>
    <property type="evidence" value="ECO:0007669"/>
    <property type="project" value="UniProtKB-UniRule"/>
</dbReference>
<dbReference type="GO" id="GO:0045145">
    <property type="term" value="F:single-stranded DNA 5'-3' DNA exonuclease activity"/>
    <property type="evidence" value="ECO:0007669"/>
    <property type="project" value="EnsemblFungi"/>
</dbReference>
<dbReference type="GO" id="GO:0006284">
    <property type="term" value="P:base-excision repair"/>
    <property type="evidence" value="ECO:0007669"/>
    <property type="project" value="UniProtKB-UniRule"/>
</dbReference>
<dbReference type="GO" id="GO:0043137">
    <property type="term" value="P:DNA replication, removal of RNA primer"/>
    <property type="evidence" value="ECO:0007669"/>
    <property type="project" value="UniProtKB-UniRule"/>
</dbReference>
<dbReference type="GO" id="GO:0032042">
    <property type="term" value="P:mitochondrial DNA metabolic process"/>
    <property type="evidence" value="ECO:0007669"/>
    <property type="project" value="EnsemblFungi"/>
</dbReference>
<dbReference type="GO" id="GO:0070914">
    <property type="term" value="P:UV-damage excision repair"/>
    <property type="evidence" value="ECO:0007669"/>
    <property type="project" value="EnsemblFungi"/>
</dbReference>
<dbReference type="CDD" id="cd09907">
    <property type="entry name" value="H3TH_FEN1-Euk"/>
    <property type="match status" value="1"/>
</dbReference>
<dbReference type="CDD" id="cd09867">
    <property type="entry name" value="PIN_FEN1"/>
    <property type="match status" value="1"/>
</dbReference>
<dbReference type="FunFam" id="1.10.150.20:FF:000009">
    <property type="entry name" value="Flap endonuclease 1"/>
    <property type="match status" value="1"/>
</dbReference>
<dbReference type="FunFam" id="3.40.50.1010:FF:000003">
    <property type="entry name" value="Flap endonuclease 1"/>
    <property type="match status" value="1"/>
</dbReference>
<dbReference type="Gene3D" id="1.10.150.20">
    <property type="entry name" value="5' to 3' exonuclease, C-terminal subdomain"/>
    <property type="match status" value="1"/>
</dbReference>
<dbReference type="Gene3D" id="3.40.50.1010">
    <property type="entry name" value="5'-nuclease"/>
    <property type="match status" value="1"/>
</dbReference>
<dbReference type="HAMAP" id="MF_00614">
    <property type="entry name" value="Fen"/>
    <property type="match status" value="1"/>
</dbReference>
<dbReference type="InterPro" id="IPR036279">
    <property type="entry name" value="5-3_exonuclease_C_sf"/>
</dbReference>
<dbReference type="InterPro" id="IPR023426">
    <property type="entry name" value="Flap_endonuc"/>
</dbReference>
<dbReference type="InterPro" id="IPR008918">
    <property type="entry name" value="HhH2"/>
</dbReference>
<dbReference type="InterPro" id="IPR029060">
    <property type="entry name" value="PIN-like_dom_sf"/>
</dbReference>
<dbReference type="InterPro" id="IPR006086">
    <property type="entry name" value="XPG-I_dom"/>
</dbReference>
<dbReference type="InterPro" id="IPR006084">
    <property type="entry name" value="XPG/Rad2"/>
</dbReference>
<dbReference type="InterPro" id="IPR019974">
    <property type="entry name" value="XPG_CS"/>
</dbReference>
<dbReference type="InterPro" id="IPR006085">
    <property type="entry name" value="XPG_DNA_repair_N"/>
</dbReference>
<dbReference type="PANTHER" id="PTHR11081:SF9">
    <property type="entry name" value="FLAP ENDONUCLEASE 1"/>
    <property type="match status" value="1"/>
</dbReference>
<dbReference type="PANTHER" id="PTHR11081">
    <property type="entry name" value="FLAP ENDONUCLEASE FAMILY MEMBER"/>
    <property type="match status" value="1"/>
</dbReference>
<dbReference type="Pfam" id="PF00867">
    <property type="entry name" value="XPG_I"/>
    <property type="match status" value="1"/>
</dbReference>
<dbReference type="Pfam" id="PF00752">
    <property type="entry name" value="XPG_N"/>
    <property type="match status" value="1"/>
</dbReference>
<dbReference type="PRINTS" id="PR00853">
    <property type="entry name" value="XPGRADSUPER"/>
</dbReference>
<dbReference type="SMART" id="SM00279">
    <property type="entry name" value="HhH2"/>
    <property type="match status" value="1"/>
</dbReference>
<dbReference type="SMART" id="SM00484">
    <property type="entry name" value="XPGI"/>
    <property type="match status" value="1"/>
</dbReference>
<dbReference type="SMART" id="SM00485">
    <property type="entry name" value="XPGN"/>
    <property type="match status" value="1"/>
</dbReference>
<dbReference type="SUPFAM" id="SSF47807">
    <property type="entry name" value="5' to 3' exonuclease, C-terminal subdomain"/>
    <property type="match status" value="1"/>
</dbReference>
<dbReference type="SUPFAM" id="SSF88723">
    <property type="entry name" value="PIN domain-like"/>
    <property type="match status" value="1"/>
</dbReference>
<dbReference type="PROSITE" id="PS00841">
    <property type="entry name" value="XPG_1"/>
    <property type="match status" value="1"/>
</dbReference>
<dbReference type="PROSITE" id="PS00842">
    <property type="entry name" value="XPG_2"/>
    <property type="match status" value="1"/>
</dbReference>
<gene>
    <name evidence="1" type="primary">rad2</name>
    <name evidence="1" type="synonym">fen1</name>
    <name type="ORF">SJAG_01648</name>
</gene>
<evidence type="ECO:0000255" key="1">
    <source>
        <dbReference type="HAMAP-Rule" id="MF_03140"/>
    </source>
</evidence>
<evidence type="ECO:0000256" key="2">
    <source>
        <dbReference type="SAM" id="MobiDB-lite"/>
    </source>
</evidence>
<accession>B6JYI7</accession>
<reference key="1">
    <citation type="journal article" date="2011" name="Science">
        <title>Comparative functional genomics of the fission yeasts.</title>
        <authorList>
            <person name="Rhind N."/>
            <person name="Chen Z."/>
            <person name="Yassour M."/>
            <person name="Thompson D.A."/>
            <person name="Haas B.J."/>
            <person name="Habib N."/>
            <person name="Wapinski I."/>
            <person name="Roy S."/>
            <person name="Lin M.F."/>
            <person name="Heiman D.I."/>
            <person name="Young S.K."/>
            <person name="Furuya K."/>
            <person name="Guo Y."/>
            <person name="Pidoux A."/>
            <person name="Chen H.M."/>
            <person name="Robbertse B."/>
            <person name="Goldberg J.M."/>
            <person name="Aoki K."/>
            <person name="Bayne E.H."/>
            <person name="Berlin A.M."/>
            <person name="Desjardins C.A."/>
            <person name="Dobbs E."/>
            <person name="Dukaj L."/>
            <person name="Fan L."/>
            <person name="FitzGerald M.G."/>
            <person name="French C."/>
            <person name="Gujja S."/>
            <person name="Hansen K."/>
            <person name="Keifenheim D."/>
            <person name="Levin J.Z."/>
            <person name="Mosher R.A."/>
            <person name="Mueller C.A."/>
            <person name="Pfiffner J."/>
            <person name="Priest M."/>
            <person name="Russ C."/>
            <person name="Smialowska A."/>
            <person name="Swoboda P."/>
            <person name="Sykes S.M."/>
            <person name="Vaughn M."/>
            <person name="Vengrova S."/>
            <person name="Yoder R."/>
            <person name="Zeng Q."/>
            <person name="Allshire R."/>
            <person name="Baulcombe D."/>
            <person name="Birren B.W."/>
            <person name="Brown W."/>
            <person name="Ekwall K."/>
            <person name="Kellis M."/>
            <person name="Leatherwood J."/>
            <person name="Levin H."/>
            <person name="Margalit H."/>
            <person name="Martienssen R."/>
            <person name="Nieduszynski C.A."/>
            <person name="Spatafora J.W."/>
            <person name="Friedman N."/>
            <person name="Dalgaard J.Z."/>
            <person name="Baumann P."/>
            <person name="Niki H."/>
            <person name="Regev A."/>
            <person name="Nusbaum C."/>
        </authorList>
    </citation>
    <scope>NUCLEOTIDE SEQUENCE [LARGE SCALE GENOMIC DNA]</scope>
    <source>
        <strain>yFS275 / FY16936</strain>
    </source>
</reference>
<protein>
    <recommendedName>
        <fullName evidence="1">Flap endonuclease 1</fullName>
        <shortName evidence="1">FEN-1</shortName>
        <ecNumber evidence="1">3.1.-.-</ecNumber>
    </recommendedName>
    <alternativeName>
        <fullName evidence="1">Flap structure-specific endonuclease 1</fullName>
    </alternativeName>
</protein>
<organism>
    <name type="scientific">Schizosaccharomyces japonicus (strain yFS275 / FY16936)</name>
    <name type="common">Fission yeast</name>
    <dbReference type="NCBI Taxonomy" id="402676"/>
    <lineage>
        <taxon>Eukaryota</taxon>
        <taxon>Fungi</taxon>
        <taxon>Dikarya</taxon>
        <taxon>Ascomycota</taxon>
        <taxon>Taphrinomycotina</taxon>
        <taxon>Schizosaccharomycetes</taxon>
        <taxon>Schizosaccharomycetales</taxon>
        <taxon>Schizosaccharomycetaceae</taxon>
        <taxon>Schizosaccharomyces</taxon>
    </lineage>
</organism>